<proteinExistence type="evidence at transcript level"/>
<comment type="tissue specificity">
    <text evidence="2">Shows reduced expression in Wilms' tumor samples.</text>
</comment>
<feature type="chain" id="PRO_0000076228" description="KCNQ1 downstream neighbor protein">
    <location>
        <begin position="1"/>
        <end position="68"/>
    </location>
</feature>
<feature type="region of interest" description="Disordered" evidence="1">
    <location>
        <begin position="28"/>
        <end position="68"/>
    </location>
</feature>
<reference key="1">
    <citation type="journal article" date="2000" name="Hum. Mol. Genet.">
        <title>Sequence and functional comparison in the Beckwith-Wiedemann region: implications for a novel imprinting centre and extended imprinting.</title>
        <authorList>
            <person name="Engemann S."/>
            <person name="Stroedicke M."/>
            <person name="Paulsen M."/>
            <person name="Franck O."/>
            <person name="Reinhardt R."/>
            <person name="Lane N."/>
            <person name="Reik W."/>
            <person name="Walter J."/>
        </authorList>
    </citation>
    <scope>NUCLEOTIDE SEQUENCE [MRNA]</scope>
</reference>
<reference key="2">
    <citation type="journal article" date="2000" name="J. Biochem.">
        <title>A novel imprinted gene, KCNQ1DN, within the WT2 critical region of human chromosome 11p15.5 and its reduced expression in Wilms' tumors.</title>
        <authorList>
            <person name="Xin Z."/>
            <person name="Soejima H."/>
            <person name="Higashimoto K."/>
            <person name="Yatsuki H."/>
            <person name="Zhu X."/>
            <person name="Satoh Y."/>
            <person name="Masaki Z."/>
            <person name="Kaneko Y."/>
            <person name="Jinno Y."/>
            <person name="Fukuzawa R."/>
            <person name="Hata J."/>
            <person name="Mukai T."/>
        </authorList>
    </citation>
    <scope>NUCLEOTIDE SEQUENCE [MRNA]</scope>
    <scope>TISSUE SPECIFICITY</scope>
</reference>
<reference key="3">
    <citation type="journal article" date="2006" name="Nature">
        <title>Human chromosome 11 DNA sequence and analysis including novel gene identification.</title>
        <authorList>
            <person name="Taylor T.D."/>
            <person name="Noguchi H."/>
            <person name="Totoki Y."/>
            <person name="Toyoda A."/>
            <person name="Kuroki Y."/>
            <person name="Dewar K."/>
            <person name="Lloyd C."/>
            <person name="Itoh T."/>
            <person name="Takeda T."/>
            <person name="Kim D.-W."/>
            <person name="She X."/>
            <person name="Barlow K.F."/>
            <person name="Bloom T."/>
            <person name="Bruford E."/>
            <person name="Chang J.L."/>
            <person name="Cuomo C.A."/>
            <person name="Eichler E."/>
            <person name="FitzGerald M.G."/>
            <person name="Jaffe D.B."/>
            <person name="LaButti K."/>
            <person name="Nicol R."/>
            <person name="Park H.-S."/>
            <person name="Seaman C."/>
            <person name="Sougnez C."/>
            <person name="Yang X."/>
            <person name="Zimmer A.R."/>
            <person name="Zody M.C."/>
            <person name="Birren B.W."/>
            <person name="Nusbaum C."/>
            <person name="Fujiyama A."/>
            <person name="Hattori M."/>
            <person name="Rogers J."/>
            <person name="Lander E.S."/>
            <person name="Sakaki Y."/>
        </authorList>
    </citation>
    <scope>NUCLEOTIDE SEQUENCE [LARGE SCALE GENOMIC DNA]</scope>
</reference>
<reference key="4">
    <citation type="journal article" date="2004" name="Genome Res.">
        <title>The status, quality, and expansion of the NIH full-length cDNA project: the Mammalian Gene Collection (MGC).</title>
        <authorList>
            <consortium name="The MGC Project Team"/>
        </authorList>
    </citation>
    <scope>NUCLEOTIDE SEQUENCE [LARGE SCALE MRNA]</scope>
</reference>
<accession>Q9H478</accession>
<protein>
    <recommendedName>
        <fullName>KCNQ1 downstream neighbor protein</fullName>
    </recommendedName>
    <alternativeName>
        <fullName>Beckwith-Wiedemann region transcript protein</fullName>
    </alternativeName>
</protein>
<keyword id="KW-1185">Reference proteome</keyword>
<sequence length="68" mass="7384">MGRKWSGPTAEHQLPMPPPGVRLDSWKGVASGCSPSKASQEARGKEKCPTLNGQPQWSALFTLPPQRE</sequence>
<evidence type="ECO:0000256" key="1">
    <source>
        <dbReference type="SAM" id="MobiDB-lite"/>
    </source>
</evidence>
<evidence type="ECO:0000269" key="2">
    <source>
    </source>
</evidence>
<name>KCQ1D_HUMAN</name>
<gene>
    <name type="primary">KCNQ1DN</name>
    <name type="synonym">BWRT</name>
</gene>
<dbReference type="EMBL" id="AJ404617">
    <property type="protein sequence ID" value="CAB95125.2"/>
    <property type="molecule type" value="mRNA"/>
</dbReference>
<dbReference type="EMBL" id="AB039920">
    <property type="status" value="NOT_ANNOTATED_CDS"/>
    <property type="molecule type" value="mRNA"/>
</dbReference>
<dbReference type="EMBL" id="AC013791">
    <property type="status" value="NOT_ANNOTATED_CDS"/>
    <property type="molecule type" value="Genomic_DNA"/>
</dbReference>
<dbReference type="EMBL" id="BC098159">
    <property type="status" value="NOT_ANNOTATED_CDS"/>
    <property type="molecule type" value="mRNA"/>
</dbReference>
<dbReference type="EMBL" id="BC098256">
    <property type="status" value="NOT_ANNOTATED_CDS"/>
    <property type="molecule type" value="mRNA"/>
</dbReference>
<dbReference type="EMBL" id="BC098319">
    <property type="status" value="NOT_ANNOTATED_CDS"/>
    <property type="molecule type" value="mRNA"/>
</dbReference>
<dbReference type="EMBL" id="BC098344">
    <property type="status" value="NOT_ANNOTATED_CDS"/>
    <property type="molecule type" value="mRNA"/>
</dbReference>
<dbReference type="GlyGen" id="Q9H478">
    <property type="glycosylation" value="1 site"/>
</dbReference>
<dbReference type="BioMuta" id="HGNC:13335"/>
<dbReference type="UCSC" id="uc058jkc.1">
    <property type="organism name" value="human"/>
</dbReference>
<dbReference type="AGR" id="HGNC:13335"/>
<dbReference type="GeneCards" id="KCNQ1DN"/>
<dbReference type="HGNC" id="HGNC:13335">
    <property type="gene designation" value="KCNQ1DN"/>
</dbReference>
<dbReference type="MIM" id="610980">
    <property type="type" value="gene"/>
</dbReference>
<dbReference type="neXtProt" id="NX_Q9H478"/>
<dbReference type="InParanoid" id="Q9H478"/>
<dbReference type="PAN-GO" id="Q9H478">
    <property type="GO annotations" value="0 GO annotations based on evolutionary models"/>
</dbReference>
<dbReference type="PathwayCommons" id="Q9H478"/>
<dbReference type="ChiTaRS" id="KCNQ1DN">
    <property type="organism name" value="human"/>
</dbReference>
<dbReference type="Pharos" id="Q9H478">
    <property type="development level" value="Tdark"/>
</dbReference>
<dbReference type="PRO" id="PR:Q9H478"/>
<dbReference type="Proteomes" id="UP000005640">
    <property type="component" value="Unplaced"/>
</dbReference>
<dbReference type="RNAct" id="Q9H478">
    <property type="molecule type" value="protein"/>
</dbReference>
<organism>
    <name type="scientific">Homo sapiens</name>
    <name type="common">Human</name>
    <dbReference type="NCBI Taxonomy" id="9606"/>
    <lineage>
        <taxon>Eukaryota</taxon>
        <taxon>Metazoa</taxon>
        <taxon>Chordata</taxon>
        <taxon>Craniata</taxon>
        <taxon>Vertebrata</taxon>
        <taxon>Euteleostomi</taxon>
        <taxon>Mammalia</taxon>
        <taxon>Eutheria</taxon>
        <taxon>Euarchontoglires</taxon>
        <taxon>Primates</taxon>
        <taxon>Haplorrhini</taxon>
        <taxon>Catarrhini</taxon>
        <taxon>Hominidae</taxon>
        <taxon>Homo</taxon>
    </lineage>
</organism>